<name>ECCB4_MYCTO</name>
<protein>
    <recommendedName>
        <fullName>ESX-4 secretion system ATPase EccB4</fullName>
        <ecNumber evidence="3">3.6.-.-</ecNumber>
    </recommendedName>
    <alternativeName>
        <fullName>ESX conserved component B4</fullName>
    </alternativeName>
    <alternativeName>
        <fullName>Type VII secretion system protein EccB4</fullName>
        <shortName>T7SS protein EccB4</shortName>
    </alternativeName>
</protein>
<accession>P9WNR0</accession>
<accession>L0TE61</accession>
<accession>O06317</accession>
<accession>Q7D5I7</accession>
<comment type="function">
    <text evidence="1">An ATPase (By similarity).</text>
</comment>
<comment type="subunit">
    <text evidence="1">Part of the ESX-4 / type VII secretion system (T7SS), which is composed of cytosolic and membrane components.</text>
</comment>
<comment type="subcellular location">
    <subcellularLocation>
        <location evidence="3">Cell membrane</location>
        <topology evidence="3">Single-pass membrane protein</topology>
    </subcellularLocation>
</comment>
<comment type="similarity">
    <text evidence="3">Belongs to the EccB family.</text>
</comment>
<gene>
    <name type="primary">eccB4</name>
    <name type="ordered locus">MT3556</name>
</gene>
<evidence type="ECO:0000250" key="1">
    <source>
        <dbReference type="UniProtKB" id="P9WNR7"/>
    </source>
</evidence>
<evidence type="ECO:0000255" key="2"/>
<evidence type="ECO:0000305" key="3"/>
<sequence length="470" mass="48199">MPSPATTWLHVSGYRFLLRRIECALLFGDVCAATGALRARTTSLALGCVLAIVAAMGCAFVALLRPQSALGQAPIVMGRESGALYVRVDDVWHPVLNLASARLIAATNANPQPVSESELGHTKRGPLLGIPGAPQLLDQPLAGAESAWAICDSDNGGSTTVVVGPAEDSSAQVLTAEQMILVATESGSPTYLLYGGRRAVVDLADPAVVWALRLQGRVPHVVAQSLLNAVPEAPRITAPRIRGGGRASVGLPGFLVGGVVRITRASGDEYYVVLEDGVQRIGQVAADLLRFGDSQGSVNVPTVAPDVIRVAPIVNTLPVSAFPDRPPTPVDGSPGRAVTTLCVTWTPAQPGAARVAFLAGSGPPVPLGGVPVTLAQADGRGPALDAVYLPPGRSAYVAARSLSGGGTGTRYLVTDTGVRFAIHDDDVAHDLGLPTAAIPAPWPVLATLPSGPELSRANASVARDTVAPGP</sequence>
<proteinExistence type="inferred from homology"/>
<feature type="chain" id="PRO_0000427083" description="ESX-4 secretion system ATPase EccB4">
    <location>
        <begin position="1"/>
        <end position="470"/>
    </location>
</feature>
<feature type="transmembrane region" description="Helical" evidence="2">
    <location>
        <begin position="44"/>
        <end position="64"/>
    </location>
</feature>
<reference key="1">
    <citation type="journal article" date="2002" name="J. Bacteriol.">
        <title>Whole-genome comparison of Mycobacterium tuberculosis clinical and laboratory strains.</title>
        <authorList>
            <person name="Fleischmann R.D."/>
            <person name="Alland D."/>
            <person name="Eisen J.A."/>
            <person name="Carpenter L."/>
            <person name="White O."/>
            <person name="Peterson J.D."/>
            <person name="DeBoy R.T."/>
            <person name="Dodson R.J."/>
            <person name="Gwinn M.L."/>
            <person name="Haft D.H."/>
            <person name="Hickey E.K."/>
            <person name="Kolonay J.F."/>
            <person name="Nelson W.C."/>
            <person name="Umayam L.A."/>
            <person name="Ermolaeva M.D."/>
            <person name="Salzberg S.L."/>
            <person name="Delcher A."/>
            <person name="Utterback T.R."/>
            <person name="Weidman J.F."/>
            <person name="Khouri H.M."/>
            <person name="Gill J."/>
            <person name="Mikula A."/>
            <person name="Bishai W."/>
            <person name="Jacobs W.R. Jr."/>
            <person name="Venter J.C."/>
            <person name="Fraser C.M."/>
        </authorList>
    </citation>
    <scope>NUCLEOTIDE SEQUENCE [LARGE SCALE GENOMIC DNA]</scope>
    <source>
        <strain>CDC 1551 / Oshkosh</strain>
    </source>
</reference>
<dbReference type="EC" id="3.6.-.-" evidence="3"/>
<dbReference type="EMBL" id="AE000516">
    <property type="protein sequence ID" value="AAK47896.1"/>
    <property type="molecule type" value="Genomic_DNA"/>
</dbReference>
<dbReference type="PIR" id="G70564">
    <property type="entry name" value="G70564"/>
</dbReference>
<dbReference type="RefSeq" id="WP_003418333.1">
    <property type="nucleotide sequence ID" value="NZ_KK341227.1"/>
</dbReference>
<dbReference type="SMR" id="P9WNR0"/>
<dbReference type="KEGG" id="mtc:MT3556"/>
<dbReference type="PATRIC" id="fig|83331.31.peg.3815"/>
<dbReference type="HOGENOM" id="CLU_036302_3_0_11"/>
<dbReference type="Proteomes" id="UP000001020">
    <property type="component" value="Chromosome"/>
</dbReference>
<dbReference type="GO" id="GO:0005576">
    <property type="term" value="C:extracellular region"/>
    <property type="evidence" value="ECO:0007669"/>
    <property type="project" value="TreeGrafter"/>
</dbReference>
<dbReference type="GO" id="GO:0005886">
    <property type="term" value="C:plasma membrane"/>
    <property type="evidence" value="ECO:0007669"/>
    <property type="project" value="UniProtKB-SubCell"/>
</dbReference>
<dbReference type="GO" id="GO:0005524">
    <property type="term" value="F:ATP binding"/>
    <property type="evidence" value="ECO:0007669"/>
    <property type="project" value="UniProtKB-KW"/>
</dbReference>
<dbReference type="GO" id="GO:0016787">
    <property type="term" value="F:hydrolase activity"/>
    <property type="evidence" value="ECO:0007669"/>
    <property type="project" value="UniProtKB-KW"/>
</dbReference>
<dbReference type="Gene3D" id="3.30.2390.20">
    <property type="entry name" value="Type VII secretion system EccB, repeat 1 domain"/>
    <property type="match status" value="1"/>
</dbReference>
<dbReference type="Gene3D" id="2.40.50.910">
    <property type="entry name" value="Type VII secretion system EccB, repeat 3 domain"/>
    <property type="match status" value="1"/>
</dbReference>
<dbReference type="InterPro" id="IPR007795">
    <property type="entry name" value="T7SS_EccB"/>
</dbReference>
<dbReference type="InterPro" id="IPR044857">
    <property type="entry name" value="T7SS_EccB_R1"/>
</dbReference>
<dbReference type="InterPro" id="IPR042485">
    <property type="entry name" value="T7SS_EccB_R3"/>
</dbReference>
<dbReference type="NCBIfam" id="TIGR03919">
    <property type="entry name" value="T7SS_EccB"/>
    <property type="match status" value="1"/>
</dbReference>
<dbReference type="PANTHER" id="PTHR40765">
    <property type="entry name" value="ESX-2 SECRETION SYSTEM ATPASE ECCB2"/>
    <property type="match status" value="1"/>
</dbReference>
<dbReference type="PANTHER" id="PTHR40765:SF2">
    <property type="entry name" value="ESX-2 SECRETION SYSTEM ATPASE ECCB2"/>
    <property type="match status" value="1"/>
</dbReference>
<dbReference type="Pfam" id="PF05108">
    <property type="entry name" value="T7SS_ESX1_EccB"/>
    <property type="match status" value="1"/>
</dbReference>
<keyword id="KW-0067">ATP-binding</keyword>
<keyword id="KW-1003">Cell membrane</keyword>
<keyword id="KW-0378">Hydrolase</keyword>
<keyword id="KW-0472">Membrane</keyword>
<keyword id="KW-0547">Nucleotide-binding</keyword>
<keyword id="KW-1185">Reference proteome</keyword>
<keyword id="KW-0812">Transmembrane</keyword>
<keyword id="KW-1133">Transmembrane helix</keyword>
<organism>
    <name type="scientific">Mycobacterium tuberculosis (strain CDC 1551 / Oshkosh)</name>
    <dbReference type="NCBI Taxonomy" id="83331"/>
    <lineage>
        <taxon>Bacteria</taxon>
        <taxon>Bacillati</taxon>
        <taxon>Actinomycetota</taxon>
        <taxon>Actinomycetes</taxon>
        <taxon>Mycobacteriales</taxon>
        <taxon>Mycobacteriaceae</taxon>
        <taxon>Mycobacterium</taxon>
        <taxon>Mycobacterium tuberculosis complex</taxon>
    </lineage>
</organism>